<gene>
    <name evidence="1" type="primary">upp</name>
    <name type="ordered locus">SAK_1601</name>
</gene>
<proteinExistence type="inferred from homology"/>
<accession>Q3JZU9</accession>
<name>UPP_STRA1</name>
<protein>
    <recommendedName>
        <fullName evidence="1">Uracil phosphoribosyltransferase</fullName>
        <ecNumber evidence="1">2.4.2.9</ecNumber>
    </recommendedName>
    <alternativeName>
        <fullName evidence="1">UMP pyrophosphorylase</fullName>
    </alternativeName>
    <alternativeName>
        <fullName evidence="1">UPRTase</fullName>
    </alternativeName>
</protein>
<evidence type="ECO:0000255" key="1">
    <source>
        <dbReference type="HAMAP-Rule" id="MF_01218"/>
    </source>
</evidence>
<keyword id="KW-0021">Allosteric enzyme</keyword>
<keyword id="KW-0328">Glycosyltransferase</keyword>
<keyword id="KW-0342">GTP-binding</keyword>
<keyword id="KW-0460">Magnesium</keyword>
<keyword id="KW-0547">Nucleotide-binding</keyword>
<keyword id="KW-0808">Transferase</keyword>
<sequence>MGKFQVISHPLIQHKLSILRRTTTSTKDFRELVDEIAMLMGYEVSRDLPLEDVEIQTPVATTVQKQLAGKKLAIVPILRAGIGMVDGFLSLVPAAKVGHIGMYRDEETFQPVEYLVKLPEDIDQRQIFVVDPMLATGGSAILAVDSLKKRGAASIKFVCLVAAPEGVAALQEAHPDVDIYTAALDEKLNEHGYIVPGLGDAGDRLFGTK</sequence>
<reference key="1">
    <citation type="journal article" date="2005" name="Proc. Natl. Acad. Sci. U.S.A.">
        <title>Genome analysis of multiple pathogenic isolates of Streptococcus agalactiae: implications for the microbial 'pan-genome'.</title>
        <authorList>
            <person name="Tettelin H."/>
            <person name="Masignani V."/>
            <person name="Cieslewicz M.J."/>
            <person name="Donati C."/>
            <person name="Medini D."/>
            <person name="Ward N.L."/>
            <person name="Angiuoli S.V."/>
            <person name="Crabtree J."/>
            <person name="Jones A.L."/>
            <person name="Durkin A.S."/>
            <person name="DeBoy R.T."/>
            <person name="Davidsen T.M."/>
            <person name="Mora M."/>
            <person name="Scarselli M."/>
            <person name="Margarit y Ros I."/>
            <person name="Peterson J.D."/>
            <person name="Hauser C.R."/>
            <person name="Sundaram J.P."/>
            <person name="Nelson W.C."/>
            <person name="Madupu R."/>
            <person name="Brinkac L.M."/>
            <person name="Dodson R.J."/>
            <person name="Rosovitz M.J."/>
            <person name="Sullivan S.A."/>
            <person name="Daugherty S.C."/>
            <person name="Haft D.H."/>
            <person name="Selengut J."/>
            <person name="Gwinn M.L."/>
            <person name="Zhou L."/>
            <person name="Zafar N."/>
            <person name="Khouri H."/>
            <person name="Radune D."/>
            <person name="Dimitrov G."/>
            <person name="Watkins K."/>
            <person name="O'Connor K.J."/>
            <person name="Smith S."/>
            <person name="Utterback T.R."/>
            <person name="White O."/>
            <person name="Rubens C.E."/>
            <person name="Grandi G."/>
            <person name="Madoff L.C."/>
            <person name="Kasper D.L."/>
            <person name="Telford J.L."/>
            <person name="Wessels M.R."/>
            <person name="Rappuoli R."/>
            <person name="Fraser C.M."/>
        </authorList>
    </citation>
    <scope>NUCLEOTIDE SEQUENCE [LARGE SCALE GENOMIC DNA]</scope>
    <source>
        <strain>ATCC 27591 / A909 / CDC SS700</strain>
    </source>
</reference>
<dbReference type="EC" id="2.4.2.9" evidence="1"/>
<dbReference type="EMBL" id="CP000114">
    <property type="protein sequence ID" value="ABA46137.1"/>
    <property type="molecule type" value="Genomic_DNA"/>
</dbReference>
<dbReference type="RefSeq" id="WP_000514490.1">
    <property type="nucleotide sequence ID" value="NC_007432.1"/>
</dbReference>
<dbReference type="SMR" id="Q3JZU9"/>
<dbReference type="GeneID" id="66886432"/>
<dbReference type="KEGG" id="sak:SAK_1601"/>
<dbReference type="HOGENOM" id="CLU_067096_2_2_9"/>
<dbReference type="UniPathway" id="UPA00574">
    <property type="reaction ID" value="UER00636"/>
</dbReference>
<dbReference type="GO" id="GO:0005525">
    <property type="term" value="F:GTP binding"/>
    <property type="evidence" value="ECO:0007669"/>
    <property type="project" value="UniProtKB-KW"/>
</dbReference>
<dbReference type="GO" id="GO:0000287">
    <property type="term" value="F:magnesium ion binding"/>
    <property type="evidence" value="ECO:0007669"/>
    <property type="project" value="UniProtKB-UniRule"/>
</dbReference>
<dbReference type="GO" id="GO:0004845">
    <property type="term" value="F:uracil phosphoribosyltransferase activity"/>
    <property type="evidence" value="ECO:0007669"/>
    <property type="project" value="UniProtKB-UniRule"/>
</dbReference>
<dbReference type="GO" id="GO:0044206">
    <property type="term" value="P:UMP salvage"/>
    <property type="evidence" value="ECO:0007669"/>
    <property type="project" value="UniProtKB-UniRule"/>
</dbReference>
<dbReference type="GO" id="GO:0006223">
    <property type="term" value="P:uracil salvage"/>
    <property type="evidence" value="ECO:0007669"/>
    <property type="project" value="InterPro"/>
</dbReference>
<dbReference type="CDD" id="cd06223">
    <property type="entry name" value="PRTases_typeI"/>
    <property type="match status" value="1"/>
</dbReference>
<dbReference type="FunFam" id="3.40.50.2020:FF:000003">
    <property type="entry name" value="Uracil phosphoribosyltransferase"/>
    <property type="match status" value="1"/>
</dbReference>
<dbReference type="Gene3D" id="3.40.50.2020">
    <property type="match status" value="1"/>
</dbReference>
<dbReference type="HAMAP" id="MF_01218_B">
    <property type="entry name" value="Upp_B"/>
    <property type="match status" value="1"/>
</dbReference>
<dbReference type="InterPro" id="IPR000836">
    <property type="entry name" value="PRibTrfase_dom"/>
</dbReference>
<dbReference type="InterPro" id="IPR029057">
    <property type="entry name" value="PRTase-like"/>
</dbReference>
<dbReference type="InterPro" id="IPR034332">
    <property type="entry name" value="Upp_B"/>
</dbReference>
<dbReference type="InterPro" id="IPR050054">
    <property type="entry name" value="UPRTase/APRTase"/>
</dbReference>
<dbReference type="InterPro" id="IPR005765">
    <property type="entry name" value="Ura_phspho_trans"/>
</dbReference>
<dbReference type="NCBIfam" id="NF001097">
    <property type="entry name" value="PRK00129.1"/>
    <property type="match status" value="1"/>
</dbReference>
<dbReference type="NCBIfam" id="TIGR01091">
    <property type="entry name" value="upp"/>
    <property type="match status" value="1"/>
</dbReference>
<dbReference type="PANTHER" id="PTHR32315">
    <property type="entry name" value="ADENINE PHOSPHORIBOSYLTRANSFERASE"/>
    <property type="match status" value="1"/>
</dbReference>
<dbReference type="PANTHER" id="PTHR32315:SF4">
    <property type="entry name" value="URACIL PHOSPHORIBOSYLTRANSFERASE, CHLOROPLASTIC"/>
    <property type="match status" value="1"/>
</dbReference>
<dbReference type="Pfam" id="PF14681">
    <property type="entry name" value="UPRTase"/>
    <property type="match status" value="1"/>
</dbReference>
<dbReference type="SUPFAM" id="SSF53271">
    <property type="entry name" value="PRTase-like"/>
    <property type="match status" value="1"/>
</dbReference>
<organism>
    <name type="scientific">Streptococcus agalactiae serotype Ia (strain ATCC 27591 / A909 / CDC SS700)</name>
    <dbReference type="NCBI Taxonomy" id="205921"/>
    <lineage>
        <taxon>Bacteria</taxon>
        <taxon>Bacillati</taxon>
        <taxon>Bacillota</taxon>
        <taxon>Bacilli</taxon>
        <taxon>Lactobacillales</taxon>
        <taxon>Streptococcaceae</taxon>
        <taxon>Streptococcus</taxon>
    </lineage>
</organism>
<comment type="function">
    <text evidence="1">Catalyzes the conversion of uracil and 5-phospho-alpha-D-ribose 1-diphosphate (PRPP) to UMP and diphosphate.</text>
</comment>
<comment type="catalytic activity">
    <reaction evidence="1">
        <text>UMP + diphosphate = 5-phospho-alpha-D-ribose 1-diphosphate + uracil</text>
        <dbReference type="Rhea" id="RHEA:13017"/>
        <dbReference type="ChEBI" id="CHEBI:17568"/>
        <dbReference type="ChEBI" id="CHEBI:33019"/>
        <dbReference type="ChEBI" id="CHEBI:57865"/>
        <dbReference type="ChEBI" id="CHEBI:58017"/>
        <dbReference type="EC" id="2.4.2.9"/>
    </reaction>
</comment>
<comment type="cofactor">
    <cofactor evidence="1">
        <name>Mg(2+)</name>
        <dbReference type="ChEBI" id="CHEBI:18420"/>
    </cofactor>
    <text evidence="1">Binds 1 Mg(2+) ion per subunit. The magnesium is bound as Mg-PRPP.</text>
</comment>
<comment type="activity regulation">
    <text evidence="1">Allosterically activated by GTP.</text>
</comment>
<comment type="pathway">
    <text evidence="1">Pyrimidine metabolism; UMP biosynthesis via salvage pathway; UMP from uracil: step 1/1.</text>
</comment>
<comment type="similarity">
    <text evidence="1">Belongs to the UPRTase family.</text>
</comment>
<feature type="chain" id="PRO_1000053794" description="Uracil phosphoribosyltransferase">
    <location>
        <begin position="1"/>
        <end position="209"/>
    </location>
</feature>
<feature type="binding site" evidence="1">
    <location>
        <position position="79"/>
    </location>
    <ligand>
        <name>5-phospho-alpha-D-ribose 1-diphosphate</name>
        <dbReference type="ChEBI" id="CHEBI:58017"/>
    </ligand>
</feature>
<feature type="binding site" evidence="1">
    <location>
        <position position="104"/>
    </location>
    <ligand>
        <name>5-phospho-alpha-D-ribose 1-diphosphate</name>
        <dbReference type="ChEBI" id="CHEBI:58017"/>
    </ligand>
</feature>
<feature type="binding site" evidence="1">
    <location>
        <begin position="131"/>
        <end position="139"/>
    </location>
    <ligand>
        <name>5-phospho-alpha-D-ribose 1-diphosphate</name>
        <dbReference type="ChEBI" id="CHEBI:58017"/>
    </ligand>
</feature>
<feature type="binding site" evidence="1">
    <location>
        <position position="194"/>
    </location>
    <ligand>
        <name>uracil</name>
        <dbReference type="ChEBI" id="CHEBI:17568"/>
    </ligand>
</feature>
<feature type="binding site" evidence="1">
    <location>
        <begin position="199"/>
        <end position="201"/>
    </location>
    <ligand>
        <name>uracil</name>
        <dbReference type="ChEBI" id="CHEBI:17568"/>
    </ligand>
</feature>
<feature type="binding site" evidence="1">
    <location>
        <position position="200"/>
    </location>
    <ligand>
        <name>5-phospho-alpha-D-ribose 1-diphosphate</name>
        <dbReference type="ChEBI" id="CHEBI:58017"/>
    </ligand>
</feature>